<gene>
    <name evidence="1" type="primary">pyrF</name>
    <name type="ordered locus">Mrad2831_1753</name>
</gene>
<comment type="function">
    <text evidence="1">Catalyzes the decarboxylation of orotidine 5'-monophosphate (OMP) to uridine 5'-monophosphate (UMP).</text>
</comment>
<comment type="catalytic activity">
    <reaction evidence="1">
        <text>orotidine 5'-phosphate + H(+) = UMP + CO2</text>
        <dbReference type="Rhea" id="RHEA:11596"/>
        <dbReference type="ChEBI" id="CHEBI:15378"/>
        <dbReference type="ChEBI" id="CHEBI:16526"/>
        <dbReference type="ChEBI" id="CHEBI:57538"/>
        <dbReference type="ChEBI" id="CHEBI:57865"/>
        <dbReference type="EC" id="4.1.1.23"/>
    </reaction>
</comment>
<comment type="pathway">
    <text evidence="1">Pyrimidine metabolism; UMP biosynthesis via de novo pathway; UMP from orotate: step 2/2.</text>
</comment>
<comment type="subunit">
    <text evidence="1">Homodimer.</text>
</comment>
<comment type="similarity">
    <text evidence="1">Belongs to the OMP decarboxylase family. Type 1 subfamily.</text>
</comment>
<protein>
    <recommendedName>
        <fullName evidence="1">Orotidine 5'-phosphate decarboxylase</fullName>
        <ecNumber evidence="1">4.1.1.23</ecNumber>
    </recommendedName>
    <alternativeName>
        <fullName evidence="1">OMP decarboxylase</fullName>
        <shortName evidence="1">OMPDCase</shortName>
        <shortName evidence="1">OMPdecase</shortName>
    </alternativeName>
</protein>
<reference key="1">
    <citation type="submission" date="2008-03" db="EMBL/GenBank/DDBJ databases">
        <title>Complete sequence of chromosome of Methylobacterium radiotolerans JCM 2831.</title>
        <authorList>
            <consortium name="US DOE Joint Genome Institute"/>
            <person name="Copeland A."/>
            <person name="Lucas S."/>
            <person name="Lapidus A."/>
            <person name="Glavina del Rio T."/>
            <person name="Dalin E."/>
            <person name="Tice H."/>
            <person name="Bruce D."/>
            <person name="Goodwin L."/>
            <person name="Pitluck S."/>
            <person name="Kiss H."/>
            <person name="Brettin T."/>
            <person name="Detter J.C."/>
            <person name="Han C."/>
            <person name="Kuske C.R."/>
            <person name="Schmutz J."/>
            <person name="Larimer F."/>
            <person name="Land M."/>
            <person name="Hauser L."/>
            <person name="Kyrpides N."/>
            <person name="Mikhailova N."/>
            <person name="Marx C.J."/>
            <person name="Richardson P."/>
        </authorList>
    </citation>
    <scope>NUCLEOTIDE SEQUENCE [LARGE SCALE GENOMIC DNA]</scope>
    <source>
        <strain>ATCC 27329 / DSM 1819 / JCM 2831 / NBRC 15690 / NCIMB 10815 / 0-1</strain>
    </source>
</reference>
<accession>B1M7M3</accession>
<sequence>MTEIADPRDRLIVALDLPSVQAAEALIDRIGDAATFYKIGYQLGYAGGLALAERLAARGLKVFLDLKLHDIGNTVEEGVRSASGSGATFLTVHAYPQTMRAAVRGRGAGLRILAVTVLTSYDDADAAEAGYGLPVAELVAKRAAQAAEIGIDGLVCSAAEAGSVRRIVGPDRLIVTPGIRPAGAEAGDQKRVMTPGDARRAGIDHVVVGRPITGAADPRAVAQAIVADLA</sequence>
<organism>
    <name type="scientific">Methylobacterium radiotolerans (strain ATCC 27329 / DSM 1819 / JCM 2831 / NBRC 15690 / NCIMB 10815 / 0-1)</name>
    <dbReference type="NCBI Taxonomy" id="426355"/>
    <lineage>
        <taxon>Bacteria</taxon>
        <taxon>Pseudomonadati</taxon>
        <taxon>Pseudomonadota</taxon>
        <taxon>Alphaproteobacteria</taxon>
        <taxon>Hyphomicrobiales</taxon>
        <taxon>Methylobacteriaceae</taxon>
        <taxon>Methylobacterium</taxon>
    </lineage>
</organism>
<name>PYRF_METRJ</name>
<evidence type="ECO:0000255" key="1">
    <source>
        <dbReference type="HAMAP-Rule" id="MF_01200"/>
    </source>
</evidence>
<keyword id="KW-0210">Decarboxylase</keyword>
<keyword id="KW-0456">Lyase</keyword>
<keyword id="KW-0665">Pyrimidine biosynthesis</keyword>
<proteinExistence type="inferred from homology"/>
<feature type="chain" id="PRO_1000138542" description="Orotidine 5'-phosphate decarboxylase">
    <location>
        <begin position="1"/>
        <end position="230"/>
    </location>
</feature>
<feature type="active site" description="Proton donor" evidence="1">
    <location>
        <position position="67"/>
    </location>
</feature>
<feature type="binding site" evidence="1">
    <location>
        <position position="16"/>
    </location>
    <ligand>
        <name>substrate</name>
    </ligand>
</feature>
<feature type="binding site" evidence="1">
    <location>
        <position position="38"/>
    </location>
    <ligand>
        <name>substrate</name>
    </ligand>
</feature>
<feature type="binding site" evidence="1">
    <location>
        <begin position="65"/>
        <end position="74"/>
    </location>
    <ligand>
        <name>substrate</name>
    </ligand>
</feature>
<feature type="binding site" evidence="1">
    <location>
        <position position="119"/>
    </location>
    <ligand>
        <name>substrate</name>
    </ligand>
</feature>
<feature type="binding site" evidence="1">
    <location>
        <position position="180"/>
    </location>
    <ligand>
        <name>substrate</name>
    </ligand>
</feature>
<feature type="binding site" evidence="1">
    <location>
        <position position="189"/>
    </location>
    <ligand>
        <name>substrate</name>
    </ligand>
</feature>
<feature type="binding site" evidence="1">
    <location>
        <position position="209"/>
    </location>
    <ligand>
        <name>substrate</name>
    </ligand>
</feature>
<feature type="binding site" evidence="1">
    <location>
        <position position="210"/>
    </location>
    <ligand>
        <name>substrate</name>
    </ligand>
</feature>
<dbReference type="EC" id="4.1.1.23" evidence="1"/>
<dbReference type="EMBL" id="CP001001">
    <property type="protein sequence ID" value="ACB23748.1"/>
    <property type="molecule type" value="Genomic_DNA"/>
</dbReference>
<dbReference type="RefSeq" id="WP_012318735.1">
    <property type="nucleotide sequence ID" value="NC_010505.1"/>
</dbReference>
<dbReference type="SMR" id="B1M7M3"/>
<dbReference type="STRING" id="426355.Mrad2831_1753"/>
<dbReference type="GeneID" id="6137782"/>
<dbReference type="KEGG" id="mrd:Mrad2831_1753"/>
<dbReference type="PATRIC" id="fig|426355.14.peg.1801"/>
<dbReference type="eggNOG" id="COG0284">
    <property type="taxonomic scope" value="Bacteria"/>
</dbReference>
<dbReference type="HOGENOM" id="CLU_067069_1_0_5"/>
<dbReference type="OrthoDB" id="9806203at2"/>
<dbReference type="UniPathway" id="UPA00070">
    <property type="reaction ID" value="UER00120"/>
</dbReference>
<dbReference type="Proteomes" id="UP000006589">
    <property type="component" value="Chromosome"/>
</dbReference>
<dbReference type="GO" id="GO:0005829">
    <property type="term" value="C:cytosol"/>
    <property type="evidence" value="ECO:0007669"/>
    <property type="project" value="TreeGrafter"/>
</dbReference>
<dbReference type="GO" id="GO:0004590">
    <property type="term" value="F:orotidine-5'-phosphate decarboxylase activity"/>
    <property type="evidence" value="ECO:0007669"/>
    <property type="project" value="UniProtKB-UniRule"/>
</dbReference>
<dbReference type="GO" id="GO:0006207">
    <property type="term" value="P:'de novo' pyrimidine nucleobase biosynthetic process"/>
    <property type="evidence" value="ECO:0007669"/>
    <property type="project" value="InterPro"/>
</dbReference>
<dbReference type="GO" id="GO:0044205">
    <property type="term" value="P:'de novo' UMP biosynthetic process"/>
    <property type="evidence" value="ECO:0007669"/>
    <property type="project" value="UniProtKB-UniRule"/>
</dbReference>
<dbReference type="CDD" id="cd04725">
    <property type="entry name" value="OMP_decarboxylase_like"/>
    <property type="match status" value="1"/>
</dbReference>
<dbReference type="Gene3D" id="3.20.20.70">
    <property type="entry name" value="Aldolase class I"/>
    <property type="match status" value="1"/>
</dbReference>
<dbReference type="HAMAP" id="MF_01200_B">
    <property type="entry name" value="OMPdecase_type1_B"/>
    <property type="match status" value="1"/>
</dbReference>
<dbReference type="InterPro" id="IPR013785">
    <property type="entry name" value="Aldolase_TIM"/>
</dbReference>
<dbReference type="InterPro" id="IPR014732">
    <property type="entry name" value="OMPdecase"/>
</dbReference>
<dbReference type="InterPro" id="IPR018089">
    <property type="entry name" value="OMPdecase_AS"/>
</dbReference>
<dbReference type="InterPro" id="IPR047596">
    <property type="entry name" value="OMPdecase_bac"/>
</dbReference>
<dbReference type="InterPro" id="IPR001754">
    <property type="entry name" value="OMPdeCOase_dom"/>
</dbReference>
<dbReference type="InterPro" id="IPR011060">
    <property type="entry name" value="RibuloseP-bd_barrel"/>
</dbReference>
<dbReference type="NCBIfam" id="NF001273">
    <property type="entry name" value="PRK00230.1"/>
    <property type="match status" value="1"/>
</dbReference>
<dbReference type="NCBIfam" id="TIGR01740">
    <property type="entry name" value="pyrF"/>
    <property type="match status" value="1"/>
</dbReference>
<dbReference type="PANTHER" id="PTHR32119">
    <property type="entry name" value="OROTIDINE 5'-PHOSPHATE DECARBOXYLASE"/>
    <property type="match status" value="1"/>
</dbReference>
<dbReference type="PANTHER" id="PTHR32119:SF2">
    <property type="entry name" value="OROTIDINE 5'-PHOSPHATE DECARBOXYLASE"/>
    <property type="match status" value="1"/>
</dbReference>
<dbReference type="Pfam" id="PF00215">
    <property type="entry name" value="OMPdecase"/>
    <property type="match status" value="1"/>
</dbReference>
<dbReference type="SMART" id="SM00934">
    <property type="entry name" value="OMPdecase"/>
    <property type="match status" value="1"/>
</dbReference>
<dbReference type="SUPFAM" id="SSF51366">
    <property type="entry name" value="Ribulose-phoshate binding barrel"/>
    <property type="match status" value="1"/>
</dbReference>
<dbReference type="PROSITE" id="PS00156">
    <property type="entry name" value="OMPDECASE"/>
    <property type="match status" value="1"/>
</dbReference>